<keyword id="KW-0159">Chromosome partition</keyword>
<keyword id="KW-0963">Cytoplasm</keyword>
<keyword id="KW-1185">Reference proteome</keyword>
<keyword id="KW-0677">Repeat</keyword>
<keyword id="KW-0853">WD repeat</keyword>
<accession>Q99KN2</accession>
<accession>Q9DCZ7</accession>
<evidence type="ECO:0000250" key="1">
    <source>
        <dbReference type="UniProtKB" id="O76071"/>
    </source>
</evidence>
<evidence type="ECO:0000255" key="2">
    <source>
        <dbReference type="HAMAP-Rule" id="MF_03037"/>
    </source>
</evidence>
<evidence type="ECO:0000269" key="3">
    <source>
    </source>
</evidence>
<evidence type="ECO:0000305" key="4"/>
<protein>
    <recommendedName>
        <fullName evidence="2">Probable cytosolic iron-sulfur protein assembly protein CIAO1</fullName>
    </recommendedName>
    <alternativeName>
        <fullName evidence="2">WD repeat-containing protein 39</fullName>
    </alternativeName>
</protein>
<organism>
    <name type="scientific">Mus musculus</name>
    <name type="common">Mouse</name>
    <dbReference type="NCBI Taxonomy" id="10090"/>
    <lineage>
        <taxon>Eukaryota</taxon>
        <taxon>Metazoa</taxon>
        <taxon>Chordata</taxon>
        <taxon>Craniata</taxon>
        <taxon>Vertebrata</taxon>
        <taxon>Euteleostomi</taxon>
        <taxon>Mammalia</taxon>
        <taxon>Eutheria</taxon>
        <taxon>Euarchontoglires</taxon>
        <taxon>Glires</taxon>
        <taxon>Rodentia</taxon>
        <taxon>Myomorpha</taxon>
        <taxon>Muroidea</taxon>
        <taxon>Muridae</taxon>
        <taxon>Murinae</taxon>
        <taxon>Mus</taxon>
        <taxon>Mus</taxon>
    </lineage>
</organism>
<gene>
    <name evidence="2" type="primary">Ciao1</name>
    <name type="synonym">Wdr39</name>
</gene>
<name>CIAO1_MOUSE</name>
<sequence>MKDSLVLQSRVPAHPDSRCWFLAWNPSGTLLASCGGDRKIRIWGTEGDSWICKSVLSEGHQRTVRKVAWSPCGNYLASASFDATTCIWKKNQDDFECVTTLEGHENEVKSVAWAPSGNLLATCSRDKSVWVWEVDEEDEYECVSVLSSHTQDVKHVVWHPSQELLASASYDDTVKLYQEEGDDWVCCATLEGHESTVWSIAFDPSGQRLASCSDDRTVRIWRQYLPGNEQGVACSGSDPSWKCICTLSGFHTRTIYDVAWCQLTGALATACGDDAIRVFEEDPGSDPQQPTFSLTAHLRQAHSQDVNCVAWNPKEPGLLASCSDDGEVAFWEYHQPAGL</sequence>
<feature type="chain" id="PRO_0000281106" description="Probable cytosolic iron-sulfur protein assembly protein CIAO1">
    <location>
        <begin position="1"/>
        <end position="339"/>
    </location>
</feature>
<feature type="repeat" description="WD 1">
    <location>
        <begin position="14"/>
        <end position="53"/>
    </location>
</feature>
<feature type="repeat" description="WD 2">
    <location>
        <begin position="59"/>
        <end position="98"/>
    </location>
</feature>
<feature type="repeat" description="WD 3">
    <location>
        <begin position="103"/>
        <end position="142"/>
    </location>
</feature>
<feature type="repeat" description="WD 4">
    <location>
        <begin position="148"/>
        <end position="187"/>
    </location>
</feature>
<feature type="repeat" description="WD 5">
    <location>
        <begin position="192"/>
        <end position="231"/>
    </location>
</feature>
<feature type="repeat" description="WD 6">
    <location>
        <begin position="250"/>
        <end position="289"/>
    </location>
</feature>
<feature type="repeat" description="WD 7">
    <location>
        <begin position="301"/>
        <end position="339"/>
    </location>
</feature>
<feature type="short sequence motif" description="LYR motif; required for interaction with HSC20" evidence="1">
    <location>
        <begin position="176"/>
        <end position="178"/>
    </location>
</feature>
<feature type="sequence conflict" description="In Ref. 1; BAB22008." evidence="4" ref="1">
    <original>R</original>
    <variation>M</variation>
    <location>
        <position position="65"/>
    </location>
</feature>
<feature type="sequence conflict" description="In Ref. 1; BAB22008." evidence="4" ref="1">
    <original>S</original>
    <variation>N</variation>
    <location>
        <position position="213"/>
    </location>
</feature>
<reference key="1">
    <citation type="journal article" date="2005" name="Science">
        <title>The transcriptional landscape of the mammalian genome.</title>
        <authorList>
            <person name="Carninci P."/>
            <person name="Kasukawa T."/>
            <person name="Katayama S."/>
            <person name="Gough J."/>
            <person name="Frith M.C."/>
            <person name="Maeda N."/>
            <person name="Oyama R."/>
            <person name="Ravasi T."/>
            <person name="Lenhard B."/>
            <person name="Wells C."/>
            <person name="Kodzius R."/>
            <person name="Shimokawa K."/>
            <person name="Bajic V.B."/>
            <person name="Brenner S.E."/>
            <person name="Batalov S."/>
            <person name="Forrest A.R."/>
            <person name="Zavolan M."/>
            <person name="Davis M.J."/>
            <person name="Wilming L.G."/>
            <person name="Aidinis V."/>
            <person name="Allen J.E."/>
            <person name="Ambesi-Impiombato A."/>
            <person name="Apweiler R."/>
            <person name="Aturaliya R.N."/>
            <person name="Bailey T.L."/>
            <person name="Bansal M."/>
            <person name="Baxter L."/>
            <person name="Beisel K.W."/>
            <person name="Bersano T."/>
            <person name="Bono H."/>
            <person name="Chalk A.M."/>
            <person name="Chiu K.P."/>
            <person name="Choudhary V."/>
            <person name="Christoffels A."/>
            <person name="Clutterbuck D.R."/>
            <person name="Crowe M.L."/>
            <person name="Dalla E."/>
            <person name="Dalrymple B.P."/>
            <person name="de Bono B."/>
            <person name="Della Gatta G."/>
            <person name="di Bernardo D."/>
            <person name="Down T."/>
            <person name="Engstrom P."/>
            <person name="Fagiolini M."/>
            <person name="Faulkner G."/>
            <person name="Fletcher C.F."/>
            <person name="Fukushima T."/>
            <person name="Furuno M."/>
            <person name="Futaki S."/>
            <person name="Gariboldi M."/>
            <person name="Georgii-Hemming P."/>
            <person name="Gingeras T.R."/>
            <person name="Gojobori T."/>
            <person name="Green R.E."/>
            <person name="Gustincich S."/>
            <person name="Harbers M."/>
            <person name="Hayashi Y."/>
            <person name="Hensch T.K."/>
            <person name="Hirokawa N."/>
            <person name="Hill D."/>
            <person name="Huminiecki L."/>
            <person name="Iacono M."/>
            <person name="Ikeo K."/>
            <person name="Iwama A."/>
            <person name="Ishikawa T."/>
            <person name="Jakt M."/>
            <person name="Kanapin A."/>
            <person name="Katoh M."/>
            <person name="Kawasawa Y."/>
            <person name="Kelso J."/>
            <person name="Kitamura H."/>
            <person name="Kitano H."/>
            <person name="Kollias G."/>
            <person name="Krishnan S.P."/>
            <person name="Kruger A."/>
            <person name="Kummerfeld S.K."/>
            <person name="Kurochkin I.V."/>
            <person name="Lareau L.F."/>
            <person name="Lazarevic D."/>
            <person name="Lipovich L."/>
            <person name="Liu J."/>
            <person name="Liuni S."/>
            <person name="McWilliam S."/>
            <person name="Madan Babu M."/>
            <person name="Madera M."/>
            <person name="Marchionni L."/>
            <person name="Matsuda H."/>
            <person name="Matsuzawa S."/>
            <person name="Miki H."/>
            <person name="Mignone F."/>
            <person name="Miyake S."/>
            <person name="Morris K."/>
            <person name="Mottagui-Tabar S."/>
            <person name="Mulder N."/>
            <person name="Nakano N."/>
            <person name="Nakauchi H."/>
            <person name="Ng P."/>
            <person name="Nilsson R."/>
            <person name="Nishiguchi S."/>
            <person name="Nishikawa S."/>
            <person name="Nori F."/>
            <person name="Ohara O."/>
            <person name="Okazaki Y."/>
            <person name="Orlando V."/>
            <person name="Pang K.C."/>
            <person name="Pavan W.J."/>
            <person name="Pavesi G."/>
            <person name="Pesole G."/>
            <person name="Petrovsky N."/>
            <person name="Piazza S."/>
            <person name="Reed J."/>
            <person name="Reid J.F."/>
            <person name="Ring B.Z."/>
            <person name="Ringwald M."/>
            <person name="Rost B."/>
            <person name="Ruan Y."/>
            <person name="Salzberg S.L."/>
            <person name="Sandelin A."/>
            <person name="Schneider C."/>
            <person name="Schoenbach C."/>
            <person name="Sekiguchi K."/>
            <person name="Semple C.A."/>
            <person name="Seno S."/>
            <person name="Sessa L."/>
            <person name="Sheng Y."/>
            <person name="Shibata Y."/>
            <person name="Shimada H."/>
            <person name="Shimada K."/>
            <person name="Silva D."/>
            <person name="Sinclair B."/>
            <person name="Sperling S."/>
            <person name="Stupka E."/>
            <person name="Sugiura K."/>
            <person name="Sultana R."/>
            <person name="Takenaka Y."/>
            <person name="Taki K."/>
            <person name="Tammoja K."/>
            <person name="Tan S.L."/>
            <person name="Tang S."/>
            <person name="Taylor M.S."/>
            <person name="Tegner J."/>
            <person name="Teichmann S.A."/>
            <person name="Ueda H.R."/>
            <person name="van Nimwegen E."/>
            <person name="Verardo R."/>
            <person name="Wei C.L."/>
            <person name="Yagi K."/>
            <person name="Yamanishi H."/>
            <person name="Zabarovsky E."/>
            <person name="Zhu S."/>
            <person name="Zimmer A."/>
            <person name="Hide W."/>
            <person name="Bult C."/>
            <person name="Grimmond S.M."/>
            <person name="Teasdale R.D."/>
            <person name="Liu E.T."/>
            <person name="Brusic V."/>
            <person name="Quackenbush J."/>
            <person name="Wahlestedt C."/>
            <person name="Mattick J.S."/>
            <person name="Hume D.A."/>
            <person name="Kai C."/>
            <person name="Sasaki D."/>
            <person name="Tomaru Y."/>
            <person name="Fukuda S."/>
            <person name="Kanamori-Katayama M."/>
            <person name="Suzuki M."/>
            <person name="Aoki J."/>
            <person name="Arakawa T."/>
            <person name="Iida J."/>
            <person name="Imamura K."/>
            <person name="Itoh M."/>
            <person name="Kato T."/>
            <person name="Kawaji H."/>
            <person name="Kawagashira N."/>
            <person name="Kawashima T."/>
            <person name="Kojima M."/>
            <person name="Kondo S."/>
            <person name="Konno H."/>
            <person name="Nakano K."/>
            <person name="Ninomiya N."/>
            <person name="Nishio T."/>
            <person name="Okada M."/>
            <person name="Plessy C."/>
            <person name="Shibata K."/>
            <person name="Shiraki T."/>
            <person name="Suzuki S."/>
            <person name="Tagami M."/>
            <person name="Waki K."/>
            <person name="Watahiki A."/>
            <person name="Okamura-Oho Y."/>
            <person name="Suzuki H."/>
            <person name="Kawai J."/>
            <person name="Hayashizaki Y."/>
        </authorList>
    </citation>
    <scope>NUCLEOTIDE SEQUENCE [LARGE SCALE MRNA]</scope>
    <source>
        <strain>C57BL/6J</strain>
        <tissue>Kidney</tissue>
        <tissue>Placenta</tissue>
    </source>
</reference>
<reference key="2">
    <citation type="journal article" date="2009" name="PLoS Biol.">
        <title>Lineage-specific biology revealed by a finished genome assembly of the mouse.</title>
        <authorList>
            <person name="Church D.M."/>
            <person name="Goodstadt L."/>
            <person name="Hillier L.W."/>
            <person name="Zody M.C."/>
            <person name="Goldstein S."/>
            <person name="She X."/>
            <person name="Bult C.J."/>
            <person name="Agarwala R."/>
            <person name="Cherry J.L."/>
            <person name="DiCuccio M."/>
            <person name="Hlavina W."/>
            <person name="Kapustin Y."/>
            <person name="Meric P."/>
            <person name="Maglott D."/>
            <person name="Birtle Z."/>
            <person name="Marques A.C."/>
            <person name="Graves T."/>
            <person name="Zhou S."/>
            <person name="Teague B."/>
            <person name="Potamousis K."/>
            <person name="Churas C."/>
            <person name="Place M."/>
            <person name="Herschleb J."/>
            <person name="Runnheim R."/>
            <person name="Forrest D."/>
            <person name="Amos-Landgraf J."/>
            <person name="Schwartz D.C."/>
            <person name="Cheng Z."/>
            <person name="Lindblad-Toh K."/>
            <person name="Eichler E.E."/>
            <person name="Ponting C.P."/>
        </authorList>
    </citation>
    <scope>NUCLEOTIDE SEQUENCE [LARGE SCALE GENOMIC DNA]</scope>
    <source>
        <strain>C57BL/6J</strain>
    </source>
</reference>
<reference key="3">
    <citation type="journal article" date="2004" name="Genome Res.">
        <title>The status, quality, and expansion of the NIH full-length cDNA project: the Mammalian Gene Collection (MGC).</title>
        <authorList>
            <consortium name="The MGC Project Team"/>
        </authorList>
    </citation>
    <scope>NUCLEOTIDE SEQUENCE [LARGE SCALE MRNA]</scope>
    <source>
        <strain>FVB/N</strain>
        <tissue>Mammary tumor</tissue>
    </source>
</reference>
<reference key="4">
    <citation type="journal article" date="2010" name="Cell">
        <title>A tissue-specific atlas of mouse protein phosphorylation and expression.</title>
        <authorList>
            <person name="Huttlin E.L."/>
            <person name="Jedrychowski M.P."/>
            <person name="Elias J.E."/>
            <person name="Goswami T."/>
            <person name="Rad R."/>
            <person name="Beausoleil S.A."/>
            <person name="Villen J."/>
            <person name="Haas W."/>
            <person name="Sowa M.E."/>
            <person name="Gygi S.P."/>
        </authorList>
    </citation>
    <scope>IDENTIFICATION BY MASS SPECTROMETRY [LARGE SCALE ANALYSIS]</scope>
    <source>
        <tissue>Brain</tissue>
        <tissue>Brown adipose tissue</tissue>
        <tissue>Heart</tissue>
        <tissue>Liver</tissue>
        <tissue>Lung</tissue>
        <tissue>Spleen</tissue>
        <tissue>Testis</tissue>
    </source>
</reference>
<reference key="5">
    <citation type="journal article" date="2013" name="Cell Metab.">
        <title>Human CIA2A-FAM96A and CIA2B-FAM96B integrate iron homeostasis and maturation of different subsets of cytosolic-nuclear iron-sulfur proteins.</title>
        <authorList>
            <person name="Stehling O."/>
            <person name="Mascarenhas J."/>
            <person name="Vashisht A.A."/>
            <person name="Sheftel A.D."/>
            <person name="Niggemeyer B."/>
            <person name="Roesser R."/>
            <person name="Pierik A.J."/>
            <person name="Wohlschlegel J.A."/>
            <person name="Lill R."/>
        </authorList>
    </citation>
    <scope>INTERACTION WITH CIAO2A</scope>
</reference>
<comment type="function">
    <text evidence="1 2">Key component of the cytosolic iron-sulfur protein assembly (CIA) complex, a multiprotein complex that mediates the incorporation of iron-sulfur cluster into extramitochondrial Fe/S proteins (By similarity). As a CIA complex component, interacts specifically with CIAO2A or CIAO2B and MMS19 to assist different branches of iron-sulfur protein assembly, depending of its interactors. The complex CIAO1:CIAO2B:MMS19 binds to and facilitates the assembly of most cytosolic-nuclear Fe/S proteins. CIAO1:CIAO2A specifically matures ACO1 and stabilizes IREB2 (By similarity). Seems to specifically modulate the transactivation activity of WT1. As part of the mitotic spindle-associated MMXD complex it may play a role in chromosome segregation (By similarity).</text>
</comment>
<comment type="subunit">
    <text evidence="1 2 3">Component of the CIA complex. Interacts with CIAO2A and forms a complex with CIAO2B and MMS19; the interactions with CIAO2A and CIAO2B are mutually exclusive (By similarity) (PubMed:23891004). Interacts with CHD1L, ERCC2, IREB2 and POLD1 (By similarity). Component of the MMXD complex, which includes CIAO1, ERCC2, CIAO2B, MMS19 and SLC25A5. Interacts with WT1 (By similarity). Interacts with CIAO3 (By similarity). Interacts (via LYR motif) with HSC20.</text>
</comment>
<comment type="subcellular location">
    <subcellularLocation>
        <location evidence="1">Cytoplasm</location>
    </subcellularLocation>
</comment>
<comment type="similarity">
    <text evidence="2">Belongs to the WD repeat CIA1 family.</text>
</comment>
<dbReference type="EMBL" id="AK002314">
    <property type="protein sequence ID" value="BAB22008.1"/>
    <property type="molecule type" value="mRNA"/>
</dbReference>
<dbReference type="EMBL" id="AK028376">
    <property type="protein sequence ID" value="BAC25915.1"/>
    <property type="molecule type" value="mRNA"/>
</dbReference>
<dbReference type="EMBL" id="AL845368">
    <property type="status" value="NOT_ANNOTATED_CDS"/>
    <property type="molecule type" value="Genomic_DNA"/>
</dbReference>
<dbReference type="EMBL" id="BC004089">
    <property type="protein sequence ID" value="AAH04089.1"/>
    <property type="molecule type" value="mRNA"/>
</dbReference>
<dbReference type="CCDS" id="CCDS16696.1"/>
<dbReference type="RefSeq" id="NP_079572.2">
    <property type="nucleotide sequence ID" value="NM_025296.4"/>
</dbReference>
<dbReference type="SMR" id="Q99KN2"/>
<dbReference type="BioGRID" id="204931">
    <property type="interactions" value="3"/>
</dbReference>
<dbReference type="FunCoup" id="Q99KN2">
    <property type="interactions" value="2911"/>
</dbReference>
<dbReference type="IntAct" id="Q99KN2">
    <property type="interactions" value="4"/>
</dbReference>
<dbReference type="MINT" id="Q99KN2"/>
<dbReference type="STRING" id="10090.ENSMUSP00000003759"/>
<dbReference type="iPTMnet" id="Q99KN2"/>
<dbReference type="PhosphoSitePlus" id="Q99KN2"/>
<dbReference type="SwissPalm" id="Q99KN2"/>
<dbReference type="PaxDb" id="10090-ENSMUSP00000003759"/>
<dbReference type="PeptideAtlas" id="Q99KN2"/>
<dbReference type="ProteomicsDB" id="283554"/>
<dbReference type="Pumba" id="Q99KN2"/>
<dbReference type="Antibodypedia" id="17416">
    <property type="antibodies" value="246 antibodies from 29 providers"/>
</dbReference>
<dbReference type="DNASU" id="26371"/>
<dbReference type="Ensembl" id="ENSMUST00000003759.11">
    <property type="protein sequence ID" value="ENSMUSP00000003759.5"/>
    <property type="gene ID" value="ENSMUSG00000003662.11"/>
</dbReference>
<dbReference type="GeneID" id="26371"/>
<dbReference type="KEGG" id="mmu:26371"/>
<dbReference type="UCSC" id="uc008mfb.2">
    <property type="organism name" value="mouse"/>
</dbReference>
<dbReference type="AGR" id="MGI:1346998"/>
<dbReference type="CTD" id="9391"/>
<dbReference type="MGI" id="MGI:1346998">
    <property type="gene designation" value="Ciao1"/>
</dbReference>
<dbReference type="VEuPathDB" id="HostDB:ENSMUSG00000003662"/>
<dbReference type="eggNOG" id="KOG0645">
    <property type="taxonomic scope" value="Eukaryota"/>
</dbReference>
<dbReference type="GeneTree" id="ENSGT00940000158670"/>
<dbReference type="InParanoid" id="Q99KN2"/>
<dbReference type="OMA" id="IREIRWS"/>
<dbReference type="OrthoDB" id="284782at2759"/>
<dbReference type="PhylomeDB" id="Q99KN2"/>
<dbReference type="TreeFam" id="TF318181"/>
<dbReference type="BioGRID-ORCS" id="26371">
    <property type="hits" value="29 hits in 82 CRISPR screens"/>
</dbReference>
<dbReference type="ChiTaRS" id="Ciao1">
    <property type="organism name" value="mouse"/>
</dbReference>
<dbReference type="PRO" id="PR:Q99KN2"/>
<dbReference type="Proteomes" id="UP000000589">
    <property type="component" value="Chromosome 2"/>
</dbReference>
<dbReference type="RNAct" id="Q99KN2">
    <property type="molecule type" value="protein"/>
</dbReference>
<dbReference type="Bgee" id="ENSMUSG00000003662">
    <property type="expression patterns" value="Expressed in heart right ventricle and 274 other cell types or tissues"/>
</dbReference>
<dbReference type="ExpressionAtlas" id="Q99KN2">
    <property type="expression patterns" value="baseline and differential"/>
</dbReference>
<dbReference type="GO" id="GO:0005737">
    <property type="term" value="C:cytoplasm"/>
    <property type="evidence" value="ECO:0000250"/>
    <property type="project" value="UniProtKB"/>
</dbReference>
<dbReference type="GO" id="GO:0097361">
    <property type="term" value="C:cytosolic [4Fe-4S] assembly targeting complex"/>
    <property type="evidence" value="ECO:0000250"/>
    <property type="project" value="UniProtKB"/>
</dbReference>
<dbReference type="GO" id="GO:0071817">
    <property type="term" value="C:MMXD complex"/>
    <property type="evidence" value="ECO:0000250"/>
    <property type="project" value="UniProtKB"/>
</dbReference>
<dbReference type="GO" id="GO:0003700">
    <property type="term" value="F:DNA-binding transcription factor activity"/>
    <property type="evidence" value="ECO:0000304"/>
    <property type="project" value="MGI"/>
</dbReference>
<dbReference type="GO" id="GO:0007059">
    <property type="term" value="P:chromosome segregation"/>
    <property type="evidence" value="ECO:0007669"/>
    <property type="project" value="UniProtKB-KW"/>
</dbReference>
<dbReference type="GO" id="GO:0016226">
    <property type="term" value="P:iron-sulfur cluster assembly"/>
    <property type="evidence" value="ECO:0007669"/>
    <property type="project" value="UniProtKB-UniRule"/>
</dbReference>
<dbReference type="GO" id="GO:0051604">
    <property type="term" value="P:protein maturation"/>
    <property type="evidence" value="ECO:0000250"/>
    <property type="project" value="UniProtKB"/>
</dbReference>
<dbReference type="GO" id="GO:0006357">
    <property type="term" value="P:regulation of transcription by RNA polymerase II"/>
    <property type="evidence" value="ECO:0000304"/>
    <property type="project" value="MGI"/>
</dbReference>
<dbReference type="CDD" id="cd00200">
    <property type="entry name" value="WD40"/>
    <property type="match status" value="1"/>
</dbReference>
<dbReference type="FunFam" id="2.130.10.10:FF:000136">
    <property type="entry name" value="Probable cytosolic iron-sulfur protein assembly protein CIAO1"/>
    <property type="match status" value="1"/>
</dbReference>
<dbReference type="Gene3D" id="2.130.10.10">
    <property type="entry name" value="YVTN repeat-like/Quinoprotein amine dehydrogenase"/>
    <property type="match status" value="1"/>
</dbReference>
<dbReference type="HAMAP" id="MF_03037">
    <property type="entry name" value="ciao1"/>
    <property type="match status" value="1"/>
</dbReference>
<dbReference type="InterPro" id="IPR028608">
    <property type="entry name" value="CIAO1/Cia1"/>
</dbReference>
<dbReference type="InterPro" id="IPR015943">
    <property type="entry name" value="WD40/YVTN_repeat-like_dom_sf"/>
</dbReference>
<dbReference type="InterPro" id="IPR019775">
    <property type="entry name" value="WD40_repeat_CS"/>
</dbReference>
<dbReference type="InterPro" id="IPR036322">
    <property type="entry name" value="WD40_repeat_dom_sf"/>
</dbReference>
<dbReference type="InterPro" id="IPR001680">
    <property type="entry name" value="WD40_rpt"/>
</dbReference>
<dbReference type="PANTHER" id="PTHR19920:SF0">
    <property type="entry name" value="CYTOSOLIC IRON-SULFUR PROTEIN ASSEMBLY PROTEIN CIAO1-RELATED"/>
    <property type="match status" value="1"/>
</dbReference>
<dbReference type="PANTHER" id="PTHR19920">
    <property type="entry name" value="WD40 PROTEIN CIAO1"/>
    <property type="match status" value="1"/>
</dbReference>
<dbReference type="Pfam" id="PF00400">
    <property type="entry name" value="WD40"/>
    <property type="match status" value="7"/>
</dbReference>
<dbReference type="SMART" id="SM00320">
    <property type="entry name" value="WD40"/>
    <property type="match status" value="7"/>
</dbReference>
<dbReference type="SUPFAM" id="SSF50978">
    <property type="entry name" value="WD40 repeat-like"/>
    <property type="match status" value="1"/>
</dbReference>
<dbReference type="PROSITE" id="PS00678">
    <property type="entry name" value="WD_REPEATS_1"/>
    <property type="match status" value="1"/>
</dbReference>
<dbReference type="PROSITE" id="PS50082">
    <property type="entry name" value="WD_REPEATS_2"/>
    <property type="match status" value="6"/>
</dbReference>
<dbReference type="PROSITE" id="PS50294">
    <property type="entry name" value="WD_REPEATS_REGION"/>
    <property type="match status" value="1"/>
</dbReference>
<proteinExistence type="evidence at protein level"/>